<organism>
    <name type="scientific">Yersinia pestis bv. Antiqua (strain Antiqua)</name>
    <dbReference type="NCBI Taxonomy" id="360102"/>
    <lineage>
        <taxon>Bacteria</taxon>
        <taxon>Pseudomonadati</taxon>
        <taxon>Pseudomonadota</taxon>
        <taxon>Gammaproteobacteria</taxon>
        <taxon>Enterobacterales</taxon>
        <taxon>Yersiniaceae</taxon>
        <taxon>Yersinia</taxon>
    </lineage>
</organism>
<comment type="function">
    <text evidence="1">Catalyzes the ATP-dependent transfer of a sulfur to tRNA to produce 4-thiouridine in position 8 of tRNAs, which functions as a near-UV photosensor. Also catalyzes the transfer of sulfur to the sulfur carrier protein ThiS, forming ThiS-thiocarboxylate. This is a step in the synthesis of thiazole, in the thiamine biosynthesis pathway. The sulfur is donated as persulfide by IscS.</text>
</comment>
<comment type="catalytic activity">
    <reaction evidence="1">
        <text>[ThiI sulfur-carrier protein]-S-sulfanyl-L-cysteine + a uridine in tRNA + 2 reduced [2Fe-2S]-[ferredoxin] + ATP + H(+) = [ThiI sulfur-carrier protein]-L-cysteine + a 4-thiouridine in tRNA + 2 oxidized [2Fe-2S]-[ferredoxin] + AMP + diphosphate</text>
        <dbReference type="Rhea" id="RHEA:24176"/>
        <dbReference type="Rhea" id="RHEA-COMP:10000"/>
        <dbReference type="Rhea" id="RHEA-COMP:10001"/>
        <dbReference type="Rhea" id="RHEA-COMP:13337"/>
        <dbReference type="Rhea" id="RHEA-COMP:13338"/>
        <dbReference type="Rhea" id="RHEA-COMP:13339"/>
        <dbReference type="Rhea" id="RHEA-COMP:13340"/>
        <dbReference type="ChEBI" id="CHEBI:15378"/>
        <dbReference type="ChEBI" id="CHEBI:29950"/>
        <dbReference type="ChEBI" id="CHEBI:30616"/>
        <dbReference type="ChEBI" id="CHEBI:33019"/>
        <dbReference type="ChEBI" id="CHEBI:33737"/>
        <dbReference type="ChEBI" id="CHEBI:33738"/>
        <dbReference type="ChEBI" id="CHEBI:61963"/>
        <dbReference type="ChEBI" id="CHEBI:65315"/>
        <dbReference type="ChEBI" id="CHEBI:136798"/>
        <dbReference type="ChEBI" id="CHEBI:456215"/>
        <dbReference type="EC" id="2.8.1.4"/>
    </reaction>
</comment>
<comment type="catalytic activity">
    <reaction evidence="1">
        <text>[ThiS sulfur-carrier protein]-C-terminal Gly-Gly-AMP + S-sulfanyl-L-cysteinyl-[cysteine desulfurase] + AH2 = [ThiS sulfur-carrier protein]-C-terminal-Gly-aminoethanethioate + L-cysteinyl-[cysteine desulfurase] + A + AMP + 2 H(+)</text>
        <dbReference type="Rhea" id="RHEA:43340"/>
        <dbReference type="Rhea" id="RHEA-COMP:12157"/>
        <dbReference type="Rhea" id="RHEA-COMP:12158"/>
        <dbReference type="Rhea" id="RHEA-COMP:12910"/>
        <dbReference type="Rhea" id="RHEA-COMP:19908"/>
        <dbReference type="ChEBI" id="CHEBI:13193"/>
        <dbReference type="ChEBI" id="CHEBI:15378"/>
        <dbReference type="ChEBI" id="CHEBI:17499"/>
        <dbReference type="ChEBI" id="CHEBI:29950"/>
        <dbReference type="ChEBI" id="CHEBI:61963"/>
        <dbReference type="ChEBI" id="CHEBI:90618"/>
        <dbReference type="ChEBI" id="CHEBI:232372"/>
        <dbReference type="ChEBI" id="CHEBI:456215"/>
    </reaction>
</comment>
<comment type="pathway">
    <text evidence="1">Cofactor biosynthesis; thiamine diphosphate biosynthesis.</text>
</comment>
<comment type="subcellular location">
    <subcellularLocation>
        <location evidence="1">Cytoplasm</location>
    </subcellularLocation>
</comment>
<comment type="similarity">
    <text evidence="1">Belongs to the ThiI family.</text>
</comment>
<reference key="1">
    <citation type="journal article" date="2006" name="J. Bacteriol.">
        <title>Complete genome sequence of Yersinia pestis strains Antiqua and Nepal516: evidence of gene reduction in an emerging pathogen.</title>
        <authorList>
            <person name="Chain P.S.G."/>
            <person name="Hu P."/>
            <person name="Malfatti S.A."/>
            <person name="Radnedge L."/>
            <person name="Larimer F."/>
            <person name="Vergez L.M."/>
            <person name="Worsham P."/>
            <person name="Chu M.C."/>
            <person name="Andersen G.L."/>
        </authorList>
    </citation>
    <scope>NUCLEOTIDE SEQUENCE [LARGE SCALE GENOMIC DNA]</scope>
    <source>
        <strain>Antiqua</strain>
    </source>
</reference>
<sequence>MKFIIKLFPEITIKSQSVRLRFIKILTTNIRNVLKHLEDDTLAIVRHWDHIELRTKDDNLGPEICDALTRIPGIHHILEVEDRSYSDMHNIFEQTLEAYRETLVGKTFCVRVKRRGKHEFSSGDVERYVGGGLNQHIESAKVNLTRPQVTVNLEVDQDKLILVKARHEGLGGFPIGTQEDVLSLISGGFDSGVSSYMLMRRGCRVHYCFFNLGGSAHEIGVKQVAHYLWNRFGSSHRVRFIAIDFEPVVGEILEKVEDGQMGVVLKRMMVRAASQVAERYGVQALVTGEALGQVSSQTLTNLRLIDNASDTLILRPLISHDKEHIINLARQIGTEDFAKTMPEYCGVISKSPTVKAVKAKIEEEESHFDFSILDRVVSEAKNVDIREIAQQSREQVVEVETVAELADTDVLLDIRAPDEQEEKPLKLDQVEVRSLPFYKLSSQFADLDQSKTYLLYCDRGVMSRLQALYLREQGYTNVKVYRP</sequence>
<dbReference type="EC" id="2.8.1.4" evidence="1"/>
<dbReference type="EMBL" id="CP000308">
    <property type="protein sequence ID" value="ABG14629.1"/>
    <property type="molecule type" value="Genomic_DNA"/>
</dbReference>
<dbReference type="RefSeq" id="WP_002208658.1">
    <property type="nucleotide sequence ID" value="NZ_CP009906.1"/>
</dbReference>
<dbReference type="SMR" id="Q1C4J3"/>
<dbReference type="GeneID" id="57975539"/>
<dbReference type="KEGG" id="ypa:YPA_2667"/>
<dbReference type="UniPathway" id="UPA00060"/>
<dbReference type="Proteomes" id="UP000001971">
    <property type="component" value="Chromosome"/>
</dbReference>
<dbReference type="GO" id="GO:0005829">
    <property type="term" value="C:cytosol"/>
    <property type="evidence" value="ECO:0007669"/>
    <property type="project" value="TreeGrafter"/>
</dbReference>
<dbReference type="GO" id="GO:0005524">
    <property type="term" value="F:ATP binding"/>
    <property type="evidence" value="ECO:0007669"/>
    <property type="project" value="UniProtKB-UniRule"/>
</dbReference>
<dbReference type="GO" id="GO:0004810">
    <property type="term" value="F:CCA tRNA nucleotidyltransferase activity"/>
    <property type="evidence" value="ECO:0007669"/>
    <property type="project" value="InterPro"/>
</dbReference>
<dbReference type="GO" id="GO:0000049">
    <property type="term" value="F:tRNA binding"/>
    <property type="evidence" value="ECO:0007669"/>
    <property type="project" value="UniProtKB-UniRule"/>
</dbReference>
<dbReference type="GO" id="GO:0140741">
    <property type="term" value="F:tRNA-uracil-4 sulfurtransferase activity"/>
    <property type="evidence" value="ECO:0007669"/>
    <property type="project" value="UniProtKB-EC"/>
</dbReference>
<dbReference type="GO" id="GO:0009228">
    <property type="term" value="P:thiamine biosynthetic process"/>
    <property type="evidence" value="ECO:0007669"/>
    <property type="project" value="UniProtKB-KW"/>
</dbReference>
<dbReference type="GO" id="GO:0009229">
    <property type="term" value="P:thiamine diphosphate biosynthetic process"/>
    <property type="evidence" value="ECO:0007669"/>
    <property type="project" value="UniProtKB-UniRule"/>
</dbReference>
<dbReference type="GO" id="GO:0052837">
    <property type="term" value="P:thiazole biosynthetic process"/>
    <property type="evidence" value="ECO:0007669"/>
    <property type="project" value="InterPro"/>
</dbReference>
<dbReference type="GO" id="GO:0002937">
    <property type="term" value="P:tRNA 4-thiouridine biosynthesis"/>
    <property type="evidence" value="ECO:0007669"/>
    <property type="project" value="TreeGrafter"/>
</dbReference>
<dbReference type="CDD" id="cd01712">
    <property type="entry name" value="PPase_ThiI"/>
    <property type="match status" value="1"/>
</dbReference>
<dbReference type="CDD" id="cd00158">
    <property type="entry name" value="RHOD"/>
    <property type="match status" value="1"/>
</dbReference>
<dbReference type="CDD" id="cd11716">
    <property type="entry name" value="THUMP_ThiI"/>
    <property type="match status" value="1"/>
</dbReference>
<dbReference type="FunFam" id="3.30.2130.30:FF:000002">
    <property type="entry name" value="tRNA sulfurtransferase"/>
    <property type="match status" value="1"/>
</dbReference>
<dbReference type="FunFam" id="3.40.250.10:FF:000003">
    <property type="entry name" value="tRNA sulfurtransferase"/>
    <property type="match status" value="1"/>
</dbReference>
<dbReference type="FunFam" id="3.40.50.620:FF:000029">
    <property type="entry name" value="tRNA sulfurtransferase"/>
    <property type="match status" value="1"/>
</dbReference>
<dbReference type="Gene3D" id="3.30.2130.30">
    <property type="match status" value="1"/>
</dbReference>
<dbReference type="Gene3D" id="3.40.50.620">
    <property type="entry name" value="HUPs"/>
    <property type="match status" value="1"/>
</dbReference>
<dbReference type="Gene3D" id="3.40.250.10">
    <property type="entry name" value="Rhodanese-like domain"/>
    <property type="match status" value="1"/>
</dbReference>
<dbReference type="HAMAP" id="MF_00021">
    <property type="entry name" value="ThiI"/>
    <property type="match status" value="1"/>
</dbReference>
<dbReference type="InterPro" id="IPR001763">
    <property type="entry name" value="Rhodanese-like_dom"/>
</dbReference>
<dbReference type="InterPro" id="IPR036873">
    <property type="entry name" value="Rhodanese-like_dom_sf"/>
</dbReference>
<dbReference type="InterPro" id="IPR014729">
    <property type="entry name" value="Rossmann-like_a/b/a_fold"/>
</dbReference>
<dbReference type="InterPro" id="IPR020536">
    <property type="entry name" value="ThiI_AANH"/>
</dbReference>
<dbReference type="InterPro" id="IPR054173">
    <property type="entry name" value="ThiI_fer"/>
</dbReference>
<dbReference type="InterPro" id="IPR049961">
    <property type="entry name" value="ThiI_N"/>
</dbReference>
<dbReference type="InterPro" id="IPR026340">
    <property type="entry name" value="THII_Thiazole_biosynth_dom"/>
</dbReference>
<dbReference type="InterPro" id="IPR004114">
    <property type="entry name" value="THUMP_dom"/>
</dbReference>
<dbReference type="InterPro" id="IPR049962">
    <property type="entry name" value="THUMP_ThiI"/>
</dbReference>
<dbReference type="InterPro" id="IPR003720">
    <property type="entry name" value="tRNA_STrfase"/>
</dbReference>
<dbReference type="InterPro" id="IPR050102">
    <property type="entry name" value="tRNA_sulfurtransferase_ThiI"/>
</dbReference>
<dbReference type="NCBIfam" id="TIGR04271">
    <property type="entry name" value="ThiI_C_thiazole"/>
    <property type="match status" value="1"/>
</dbReference>
<dbReference type="NCBIfam" id="TIGR00342">
    <property type="entry name" value="tRNA uracil 4-sulfurtransferase ThiI"/>
    <property type="match status" value="1"/>
</dbReference>
<dbReference type="PANTHER" id="PTHR43209">
    <property type="entry name" value="TRNA SULFURTRANSFERASE"/>
    <property type="match status" value="1"/>
</dbReference>
<dbReference type="PANTHER" id="PTHR43209:SF1">
    <property type="entry name" value="TRNA SULFURTRANSFERASE"/>
    <property type="match status" value="1"/>
</dbReference>
<dbReference type="Pfam" id="PF00581">
    <property type="entry name" value="Rhodanese"/>
    <property type="match status" value="1"/>
</dbReference>
<dbReference type="Pfam" id="PF02568">
    <property type="entry name" value="ThiI"/>
    <property type="match status" value="1"/>
</dbReference>
<dbReference type="Pfam" id="PF22025">
    <property type="entry name" value="ThiI_fer"/>
    <property type="match status" value="1"/>
</dbReference>
<dbReference type="Pfam" id="PF02926">
    <property type="entry name" value="THUMP"/>
    <property type="match status" value="1"/>
</dbReference>
<dbReference type="SMART" id="SM00981">
    <property type="entry name" value="THUMP"/>
    <property type="match status" value="1"/>
</dbReference>
<dbReference type="SUPFAM" id="SSF52402">
    <property type="entry name" value="Adenine nucleotide alpha hydrolases-like"/>
    <property type="match status" value="1"/>
</dbReference>
<dbReference type="SUPFAM" id="SSF52821">
    <property type="entry name" value="Rhodanese/Cell cycle control phosphatase"/>
    <property type="match status" value="1"/>
</dbReference>
<dbReference type="SUPFAM" id="SSF143437">
    <property type="entry name" value="THUMP domain-like"/>
    <property type="match status" value="1"/>
</dbReference>
<dbReference type="PROSITE" id="PS50206">
    <property type="entry name" value="RHODANESE_3"/>
    <property type="match status" value="1"/>
</dbReference>
<dbReference type="PROSITE" id="PS51165">
    <property type="entry name" value="THUMP"/>
    <property type="match status" value="1"/>
</dbReference>
<proteinExistence type="inferred from homology"/>
<evidence type="ECO:0000255" key="1">
    <source>
        <dbReference type="HAMAP-Rule" id="MF_00021"/>
    </source>
</evidence>
<feature type="chain" id="PRO_1000074310" description="tRNA sulfurtransferase">
    <location>
        <begin position="1"/>
        <end position="483"/>
    </location>
</feature>
<feature type="domain" description="THUMP" evidence="1">
    <location>
        <begin position="62"/>
        <end position="166"/>
    </location>
</feature>
<feature type="domain" description="Rhodanese" evidence="1">
    <location>
        <begin position="405"/>
        <end position="483"/>
    </location>
</feature>
<feature type="active site" description="Cysteine persulfide intermediate" evidence="1">
    <location>
        <position position="457"/>
    </location>
</feature>
<feature type="binding site" evidence="1">
    <location>
        <begin position="184"/>
        <end position="185"/>
    </location>
    <ligand>
        <name>ATP</name>
        <dbReference type="ChEBI" id="CHEBI:30616"/>
    </ligand>
</feature>
<feature type="binding site" evidence="1">
    <location>
        <position position="266"/>
    </location>
    <ligand>
        <name>ATP</name>
        <dbReference type="ChEBI" id="CHEBI:30616"/>
    </ligand>
</feature>
<feature type="binding site" evidence="1">
    <location>
        <position position="288"/>
    </location>
    <ligand>
        <name>ATP</name>
        <dbReference type="ChEBI" id="CHEBI:30616"/>
    </ligand>
</feature>
<feature type="binding site" evidence="1">
    <location>
        <position position="297"/>
    </location>
    <ligand>
        <name>ATP</name>
        <dbReference type="ChEBI" id="CHEBI:30616"/>
    </ligand>
</feature>
<feature type="disulfide bond" description="Redox-active" evidence="1">
    <location>
        <begin position="345"/>
        <end position="457"/>
    </location>
</feature>
<gene>
    <name evidence="1" type="primary">thiI</name>
    <name type="ordered locus">YPA_2667</name>
</gene>
<accession>Q1C4J3</accession>
<name>THII_YERPA</name>
<keyword id="KW-0067">ATP-binding</keyword>
<keyword id="KW-0963">Cytoplasm</keyword>
<keyword id="KW-1015">Disulfide bond</keyword>
<keyword id="KW-0547">Nucleotide-binding</keyword>
<keyword id="KW-0676">Redox-active center</keyword>
<keyword id="KW-0694">RNA-binding</keyword>
<keyword id="KW-0784">Thiamine biosynthesis</keyword>
<keyword id="KW-0808">Transferase</keyword>
<keyword id="KW-0820">tRNA-binding</keyword>
<protein>
    <recommendedName>
        <fullName evidence="1">tRNA sulfurtransferase</fullName>
        <ecNumber evidence="1">2.8.1.4</ecNumber>
    </recommendedName>
    <alternativeName>
        <fullName evidence="1">Sulfur carrier protein ThiS sulfurtransferase</fullName>
    </alternativeName>
    <alternativeName>
        <fullName evidence="1">Thiamine biosynthesis protein ThiI</fullName>
    </alternativeName>
    <alternativeName>
        <fullName evidence="1">tRNA 4-thiouridine synthase</fullName>
    </alternativeName>
</protein>